<proteinExistence type="inferred from homology"/>
<sequence length="321" mass="36749">MFLSSRMITSVSPSTSTNSSFLLTGFSGMEQQYPWLSIPFSSIYAMVLLGNCMVLHVIWTEPSLHQPMFYFLSMLALTDLCMGLSTVYTVLGILWGIIREISLDSCIAQSYFIHGLSFMESSVLLTMAFDRYIAICNPLRYSSILTNSRIIKIGLTIIGRSFFFITPPIICLKFFNYCHFHILSHSFCLHQDLLRLACSDIRFNSYYALMLVICILLLDAILILFSYILILKSVLAVASQEERHKLFQTCISHICAVLVFYIPIISLTMVHRFGKHLSPVAHVLIGNIYILFPPLMNPIIYSVKTQQIHTRMLRLFSLKRY</sequence>
<name>O51V1_HUMAN</name>
<gene>
    <name type="primary">OR51V1</name>
    <name type="synonym">OR51A12</name>
</gene>
<reference key="1">
    <citation type="journal article" date="2000" name="Proc. Natl. Acad. Sci. U.S.A.">
        <title>Comparative structural and functional analysis of the olfactory receptor genes flanking the human and mouse beta-globin gene clusters.</title>
        <authorList>
            <person name="Bulger M."/>
            <person name="Bender M.A."/>
            <person name="van Doorninck J.H."/>
            <person name="Wertman B."/>
            <person name="Farrell C.M."/>
            <person name="Felsenfeld G."/>
            <person name="Groudine M."/>
            <person name="Hardison R."/>
        </authorList>
    </citation>
    <scope>NUCLEOTIDE SEQUENCE [GENOMIC DNA]</scope>
</reference>
<reference key="2">
    <citation type="journal article" date="2006" name="Nature">
        <title>Human chromosome 11 DNA sequence and analysis including novel gene identification.</title>
        <authorList>
            <person name="Taylor T.D."/>
            <person name="Noguchi H."/>
            <person name="Totoki Y."/>
            <person name="Toyoda A."/>
            <person name="Kuroki Y."/>
            <person name="Dewar K."/>
            <person name="Lloyd C."/>
            <person name="Itoh T."/>
            <person name="Takeda T."/>
            <person name="Kim D.-W."/>
            <person name="She X."/>
            <person name="Barlow K.F."/>
            <person name="Bloom T."/>
            <person name="Bruford E."/>
            <person name="Chang J.L."/>
            <person name="Cuomo C.A."/>
            <person name="Eichler E."/>
            <person name="FitzGerald M.G."/>
            <person name="Jaffe D.B."/>
            <person name="LaButti K."/>
            <person name="Nicol R."/>
            <person name="Park H.-S."/>
            <person name="Seaman C."/>
            <person name="Sougnez C."/>
            <person name="Yang X."/>
            <person name="Zimmer A.R."/>
            <person name="Zody M.C."/>
            <person name="Birren B.W."/>
            <person name="Nusbaum C."/>
            <person name="Fujiyama A."/>
            <person name="Hattori M."/>
            <person name="Rogers J."/>
            <person name="Lander E.S."/>
            <person name="Sakaki Y."/>
        </authorList>
    </citation>
    <scope>NUCLEOTIDE SEQUENCE [LARGE SCALE GENOMIC DNA]</scope>
</reference>
<reference key="3">
    <citation type="journal article" date="2004" name="Proc. Natl. Acad. Sci. U.S.A.">
        <title>The human olfactory receptor gene family.</title>
        <authorList>
            <person name="Malnic B."/>
            <person name="Godfrey P.A."/>
            <person name="Buck L.B."/>
        </authorList>
    </citation>
    <scope>IDENTIFICATION</scope>
</reference>
<reference key="4">
    <citation type="journal article" date="2004" name="Proc. Natl. Acad. Sci. U.S.A.">
        <authorList>
            <person name="Malnic B."/>
            <person name="Godfrey P.A."/>
            <person name="Buck L.B."/>
        </authorList>
    </citation>
    <scope>ERRATUM OF PUBMED:14983052</scope>
</reference>
<reference key="5">
    <citation type="journal article" date="2015" name="Orphanet J. Rare Dis.">
        <title>EPS8L2 is a new causal gene for childhood onset autosomal recessive progressive hearing loss.</title>
        <authorList>
            <person name="Dahmani M."/>
            <person name="Ammar-Khodja F."/>
            <person name="Bonnet C."/>
            <person name="Lefevre G.M."/>
            <person name="Hardelin J.P."/>
            <person name="Ibrahim H."/>
            <person name="Mallek Z."/>
            <person name="Petit C."/>
        </authorList>
    </citation>
    <scope>VARIANT VAL-211</scope>
</reference>
<evidence type="ECO:0000255" key="1"/>
<evidence type="ECO:0000255" key="2">
    <source>
        <dbReference type="PROSITE-ProRule" id="PRU00521"/>
    </source>
</evidence>
<evidence type="ECO:0000269" key="3">
    <source>
    </source>
</evidence>
<evidence type="ECO:0000305" key="4"/>
<organism>
    <name type="scientific">Homo sapiens</name>
    <name type="common">Human</name>
    <dbReference type="NCBI Taxonomy" id="9606"/>
    <lineage>
        <taxon>Eukaryota</taxon>
        <taxon>Metazoa</taxon>
        <taxon>Chordata</taxon>
        <taxon>Craniata</taxon>
        <taxon>Vertebrata</taxon>
        <taxon>Euteleostomi</taxon>
        <taxon>Mammalia</taxon>
        <taxon>Eutheria</taxon>
        <taxon>Euarchontoglires</taxon>
        <taxon>Primates</taxon>
        <taxon>Haplorrhini</taxon>
        <taxon>Catarrhini</taxon>
        <taxon>Hominidae</taxon>
        <taxon>Homo</taxon>
    </lineage>
</organism>
<dbReference type="EMBL" id="AF289203">
    <property type="protein sequence ID" value="AAG42364.1"/>
    <property type="molecule type" value="Genomic_DNA"/>
</dbReference>
<dbReference type="EMBL" id="AC104389">
    <property type="status" value="NOT_ANNOTATED_CDS"/>
    <property type="molecule type" value="Genomic_DNA"/>
</dbReference>
<dbReference type="EMBL" id="BK004432">
    <property type="protein sequence ID" value="DAA04830.1"/>
    <property type="molecule type" value="Genomic_DNA"/>
</dbReference>
<dbReference type="RefSeq" id="NP_001004760.2">
    <property type="nucleotide sequence ID" value="NM_001004760.2"/>
</dbReference>
<dbReference type="SMR" id="Q9H2C8"/>
<dbReference type="BioGRID" id="129462">
    <property type="interactions" value="2"/>
</dbReference>
<dbReference type="FunCoup" id="Q9H2C8">
    <property type="interactions" value="461"/>
</dbReference>
<dbReference type="IntAct" id="Q9H2C8">
    <property type="interactions" value="1"/>
</dbReference>
<dbReference type="STRING" id="9606.ENSP00000321729"/>
<dbReference type="GlyCosmos" id="Q9H2C8">
    <property type="glycosylation" value="1 site, No reported glycans"/>
</dbReference>
<dbReference type="GlyGen" id="Q9H2C8">
    <property type="glycosylation" value="1 site"/>
</dbReference>
<dbReference type="iPTMnet" id="Q9H2C8"/>
<dbReference type="PhosphoSitePlus" id="Q9H2C8"/>
<dbReference type="BioMuta" id="OR51V1"/>
<dbReference type="DMDM" id="296439246"/>
<dbReference type="MassIVE" id="Q9H2C8"/>
<dbReference type="PaxDb" id="9606-ENSP00000321729"/>
<dbReference type="ProteomicsDB" id="80529"/>
<dbReference type="DNASU" id="283111"/>
<dbReference type="GeneID" id="283111"/>
<dbReference type="KEGG" id="hsa:283111"/>
<dbReference type="UCSC" id="uc010qyz.2">
    <property type="organism name" value="human"/>
</dbReference>
<dbReference type="AGR" id="HGNC:19597"/>
<dbReference type="CTD" id="283111"/>
<dbReference type="GeneCards" id="OR51V1"/>
<dbReference type="HGNC" id="HGNC:19597">
    <property type="gene designation" value="OR51V1"/>
</dbReference>
<dbReference type="neXtProt" id="NX_Q9H2C8"/>
<dbReference type="PharmGKB" id="PA134873075"/>
<dbReference type="eggNOG" id="ENOG502SHMK">
    <property type="taxonomic scope" value="Eukaryota"/>
</dbReference>
<dbReference type="HOGENOM" id="CLU_012526_0_0_1"/>
<dbReference type="InParanoid" id="Q9H2C8"/>
<dbReference type="OrthoDB" id="9444602at2759"/>
<dbReference type="PAN-GO" id="Q9H2C8">
    <property type="GO annotations" value="2 GO annotations based on evolutionary models"/>
</dbReference>
<dbReference type="PhylomeDB" id="Q9H2C8"/>
<dbReference type="TreeFam" id="TF342735"/>
<dbReference type="PathwayCommons" id="Q9H2C8"/>
<dbReference type="Reactome" id="R-HSA-9752946">
    <property type="pathway name" value="Expression and translocation of olfactory receptors"/>
</dbReference>
<dbReference type="SignaLink" id="Q9H2C8"/>
<dbReference type="BioGRID-ORCS" id="283111">
    <property type="hits" value="15 hits in 718 CRISPR screens"/>
</dbReference>
<dbReference type="GeneWiki" id="OR51V1"/>
<dbReference type="GenomeRNAi" id="283111"/>
<dbReference type="Pharos" id="Q9H2C8">
    <property type="development level" value="Tdark"/>
</dbReference>
<dbReference type="PRO" id="PR:Q9H2C8"/>
<dbReference type="Proteomes" id="UP000005640">
    <property type="component" value="Chromosome 11"/>
</dbReference>
<dbReference type="RNAct" id="Q9H2C8">
    <property type="molecule type" value="protein"/>
</dbReference>
<dbReference type="GO" id="GO:0016020">
    <property type="term" value="C:membrane"/>
    <property type="evidence" value="ECO:0000303"/>
    <property type="project" value="UniProtKB"/>
</dbReference>
<dbReference type="GO" id="GO:0005886">
    <property type="term" value="C:plasma membrane"/>
    <property type="evidence" value="ECO:0000318"/>
    <property type="project" value="GO_Central"/>
</dbReference>
<dbReference type="GO" id="GO:0004930">
    <property type="term" value="F:G protein-coupled receptor activity"/>
    <property type="evidence" value="ECO:0007669"/>
    <property type="project" value="UniProtKB-KW"/>
</dbReference>
<dbReference type="GO" id="GO:0004984">
    <property type="term" value="F:olfactory receptor activity"/>
    <property type="evidence" value="ECO:0000318"/>
    <property type="project" value="GO_Central"/>
</dbReference>
<dbReference type="GO" id="GO:0007608">
    <property type="term" value="P:sensory perception of smell"/>
    <property type="evidence" value="ECO:0000303"/>
    <property type="project" value="UniProtKB"/>
</dbReference>
<dbReference type="CDD" id="cd15222">
    <property type="entry name" value="7tmA_OR51-like"/>
    <property type="match status" value="1"/>
</dbReference>
<dbReference type="FunFam" id="1.20.1070.10:FF:000002">
    <property type="entry name" value="Olfactory receptor"/>
    <property type="match status" value="1"/>
</dbReference>
<dbReference type="Gene3D" id="1.20.1070.10">
    <property type="entry name" value="Rhodopsin 7-helix transmembrane proteins"/>
    <property type="match status" value="1"/>
</dbReference>
<dbReference type="InterPro" id="IPR000276">
    <property type="entry name" value="GPCR_Rhodpsn"/>
</dbReference>
<dbReference type="InterPro" id="IPR017452">
    <property type="entry name" value="GPCR_Rhodpsn_7TM"/>
</dbReference>
<dbReference type="InterPro" id="IPR000725">
    <property type="entry name" value="Olfact_rcpt"/>
</dbReference>
<dbReference type="InterPro" id="IPR050402">
    <property type="entry name" value="OR51/52/56-like"/>
</dbReference>
<dbReference type="PANTHER" id="PTHR26450:SF67">
    <property type="entry name" value="OLFACTORY RECEPTOR 51V1"/>
    <property type="match status" value="1"/>
</dbReference>
<dbReference type="PANTHER" id="PTHR26450">
    <property type="entry name" value="OLFACTORY RECEPTOR 56B1-RELATED"/>
    <property type="match status" value="1"/>
</dbReference>
<dbReference type="Pfam" id="PF13853">
    <property type="entry name" value="7tm_4"/>
    <property type="match status" value="1"/>
</dbReference>
<dbReference type="PRINTS" id="PR00237">
    <property type="entry name" value="GPCRRHODOPSN"/>
</dbReference>
<dbReference type="PRINTS" id="PR00245">
    <property type="entry name" value="OLFACTORYR"/>
</dbReference>
<dbReference type="SUPFAM" id="SSF81321">
    <property type="entry name" value="Family A G protein-coupled receptor-like"/>
    <property type="match status" value="1"/>
</dbReference>
<dbReference type="PROSITE" id="PS00237">
    <property type="entry name" value="G_PROTEIN_RECEP_F1_1"/>
    <property type="match status" value="1"/>
</dbReference>
<dbReference type="PROSITE" id="PS50262">
    <property type="entry name" value="G_PROTEIN_RECEP_F1_2"/>
    <property type="match status" value="1"/>
</dbReference>
<protein>
    <recommendedName>
        <fullName>Olfactory receptor 51V1</fullName>
    </recommendedName>
    <alternativeName>
        <fullName>Odorant receptor HOR3'beta1</fullName>
    </alternativeName>
    <alternativeName>
        <fullName>Olfactory receptor 51A12</fullName>
    </alternativeName>
    <alternativeName>
        <fullName>Olfactory receptor OR11-36</fullName>
    </alternativeName>
</protein>
<keyword id="KW-1003">Cell membrane</keyword>
<keyword id="KW-1015">Disulfide bond</keyword>
<keyword id="KW-0297">G-protein coupled receptor</keyword>
<keyword id="KW-0325">Glycoprotein</keyword>
<keyword id="KW-0472">Membrane</keyword>
<keyword id="KW-0552">Olfaction</keyword>
<keyword id="KW-0675">Receptor</keyword>
<keyword id="KW-1185">Reference proteome</keyword>
<keyword id="KW-0716">Sensory transduction</keyword>
<keyword id="KW-0807">Transducer</keyword>
<keyword id="KW-0812">Transmembrane</keyword>
<keyword id="KW-1133">Transmembrane helix</keyword>
<comment type="function">
    <text evidence="4">Odorant receptor.</text>
</comment>
<comment type="subcellular location">
    <subcellularLocation>
        <location>Cell membrane</location>
        <topology>Multi-pass membrane protein</topology>
    </subcellularLocation>
</comment>
<comment type="similarity">
    <text evidence="2">Belongs to the G-protein coupled receptor 1 family.</text>
</comment>
<comment type="online information" name="Human Olfactory Receptor Data Exploratorium (HORDE)">
    <link uri="http://genome.weizmann.ac.il/horde/card/index/symbol:OR51V1"/>
</comment>
<feature type="chain" id="PRO_0000150764" description="Olfactory receptor 51V1">
    <location>
        <begin position="1"/>
        <end position="321"/>
    </location>
</feature>
<feature type="topological domain" description="Extracellular" evidence="1">
    <location>
        <begin position="1"/>
        <end position="34"/>
    </location>
</feature>
<feature type="transmembrane region" description="Helical; Name=1" evidence="1">
    <location>
        <begin position="35"/>
        <end position="55"/>
    </location>
</feature>
<feature type="topological domain" description="Cytoplasmic" evidence="1">
    <location>
        <begin position="56"/>
        <end position="63"/>
    </location>
</feature>
<feature type="transmembrane region" description="Helical; Name=2" evidence="1">
    <location>
        <begin position="64"/>
        <end position="84"/>
    </location>
</feature>
<feature type="topological domain" description="Extracellular" evidence="1">
    <location>
        <begin position="85"/>
        <end position="108"/>
    </location>
</feature>
<feature type="transmembrane region" description="Helical; Name=3" evidence="1">
    <location>
        <begin position="109"/>
        <end position="129"/>
    </location>
</feature>
<feature type="topological domain" description="Cytoplasmic" evidence="1">
    <location>
        <begin position="130"/>
        <end position="148"/>
    </location>
</feature>
<feature type="transmembrane region" description="Helical; Name=4" evidence="1">
    <location>
        <begin position="149"/>
        <end position="169"/>
    </location>
</feature>
<feature type="topological domain" description="Extracellular" evidence="1">
    <location>
        <begin position="170"/>
        <end position="205"/>
    </location>
</feature>
<feature type="transmembrane region" description="Helical; Name=5" evidence="1">
    <location>
        <begin position="206"/>
        <end position="226"/>
    </location>
</feature>
<feature type="topological domain" description="Cytoplasmic" evidence="1">
    <location>
        <begin position="227"/>
        <end position="246"/>
    </location>
</feature>
<feature type="transmembrane region" description="Helical; Name=6" evidence="1">
    <location>
        <begin position="247"/>
        <end position="267"/>
    </location>
</feature>
<feature type="topological domain" description="Extracellular" evidence="1">
    <location>
        <begin position="268"/>
        <end position="282"/>
    </location>
</feature>
<feature type="transmembrane region" description="Helical; Name=7" evidence="1">
    <location>
        <begin position="283"/>
        <end position="303"/>
    </location>
</feature>
<feature type="topological domain" description="Cytoplasmic" evidence="1">
    <location>
        <begin position="304"/>
        <end position="321"/>
    </location>
</feature>
<feature type="glycosylation site" description="N-linked (GlcNAc...) asparagine" evidence="1">
    <location>
        <position position="18"/>
    </location>
</feature>
<feature type="disulfide bond" evidence="2">
    <location>
        <begin position="106"/>
        <end position="188"/>
    </location>
</feature>
<feature type="sequence variant" id="VAR_079498" evidence="3">
    <original>L</original>
    <variation>V</variation>
    <location>
        <position position="211"/>
    </location>
</feature>
<feature type="sequence variant" id="VAR_057580" description="In dbSNP:rs7933549.">
    <original>S</original>
    <variation>L</variation>
    <location>
        <position position="233"/>
    </location>
</feature>
<feature type="sequence conflict" description="In Ref. 1; AAG42364." evidence="4" ref="1">
    <original>L</original>
    <variation>F</variation>
    <location>
        <position position="36"/>
    </location>
</feature>
<feature type="sequence conflict" description="In Ref. 1; AAG42364." evidence="4" ref="1">
    <original>G</original>
    <variation>R</variation>
    <location>
        <position position="96"/>
    </location>
</feature>
<accession>Q9H2C8</accession>